<keyword id="KW-0002">3D-structure</keyword>
<keyword id="KW-0963">Cytoplasm</keyword>
<keyword id="KW-1017">Isopeptide bond</keyword>
<keyword id="KW-0539">Nucleus</keyword>
<keyword id="KW-0597">Phosphoprotein</keyword>
<keyword id="KW-1185">Reference proteome</keyword>
<keyword id="KW-0687">Ribonucleoprotein</keyword>
<keyword id="KW-0689">Ribosomal protein</keyword>
<keyword id="KW-0832">Ubl conjugation</keyword>
<accession>Q6QAP7</accession>
<organism>
    <name type="scientific">Sus scrofa</name>
    <name type="common">Pig</name>
    <dbReference type="NCBI Taxonomy" id="9823"/>
    <lineage>
        <taxon>Eukaryota</taxon>
        <taxon>Metazoa</taxon>
        <taxon>Chordata</taxon>
        <taxon>Craniata</taxon>
        <taxon>Vertebrata</taxon>
        <taxon>Euteleostomi</taxon>
        <taxon>Mammalia</taxon>
        <taxon>Eutheria</taxon>
        <taxon>Laurasiatheria</taxon>
        <taxon>Artiodactyla</taxon>
        <taxon>Suina</taxon>
        <taxon>Suidae</taxon>
        <taxon>Sus</taxon>
    </lineage>
</organism>
<comment type="function">
    <text evidence="1">Component of the small ribosomal subunit. The ribosome is a large ribonucleoprotein complex responsible for the synthesis of proteins in the cell. Part of the small subunit (SSU) processome, first precursor of the small eukaryotic ribosomal subunit. During the assembly of the SSU processome in the nucleolus, many ribosome biogenesis factors, an RNA chaperone and ribosomal proteins associate with the nascent pre-rRNA and work in concert to generate RNA folding, modifications, rearrangements and cleavage as well as targeted degradation of pre-ribosomal RNA by the RNA exosome.</text>
</comment>
<comment type="subunit">
    <text evidence="1">Component of the small ribosomal subunit. Part of the small subunit (SSU) processome, composed of more than 70 proteins and the RNA chaperone small nucleolar RNA (snoRNA) U3.</text>
</comment>
<comment type="subcellular location">
    <subcellularLocation>
        <location evidence="1">Cytoplasm</location>
    </subcellularLocation>
    <subcellularLocation>
        <location evidence="1">Nucleus</location>
        <location evidence="1">Nucleolus</location>
    </subcellularLocation>
</comment>
<comment type="PTM">
    <text evidence="1">Ubiquitinated at Lys-103 by RNF14 and RNF25 in response to ribosome collisions (ribosome stalling).</text>
</comment>
<comment type="similarity">
    <text evidence="3">Belongs to the eukaryotic ribosomal protein eS17 family.</text>
</comment>
<sequence>MGRVRTKTVKKAARVIIEKYYTRLGNDFHTNKRVCEEIAIIPSKKLRNKIAGYVTHLMKRIQRGPVRGISIKLQEEERERRDNYVPEVSALDQEIIEVDPDTKEMLKLLDFGSLSNLQVTQPTVGMNFKTPRGAV</sequence>
<protein>
    <recommendedName>
        <fullName evidence="3">Small ribosomal subunit protein eS17</fullName>
    </recommendedName>
    <alternativeName>
        <fullName>40S ribosomal protein S17</fullName>
    </alternativeName>
</protein>
<feature type="chain" id="PRO_0000141527" description="Small ribosomal subunit protein eS17">
    <location>
        <begin position="1"/>
        <end position="135"/>
    </location>
</feature>
<feature type="modified residue" description="N6-succinyllysine" evidence="2">
    <location>
        <position position="19"/>
    </location>
</feature>
<feature type="modified residue" description="Phosphoserine" evidence="1">
    <location>
        <position position="113"/>
    </location>
</feature>
<feature type="modified residue" description="Phosphothreonine" evidence="1">
    <location>
        <position position="130"/>
    </location>
</feature>
<feature type="cross-link" description="Glycyl lysine isopeptide (Lys-Gly) (interchain with G-Cter in SUMO1); alternate" evidence="1">
    <location>
        <position position="103"/>
    </location>
</feature>
<feature type="cross-link" description="Glycyl lysine isopeptide (Lys-Gly) (interchain with G-Cter in SUMO2); alternate" evidence="1">
    <location>
        <position position="103"/>
    </location>
</feature>
<proteinExistence type="evidence at protein level"/>
<reference key="1">
    <citation type="submission" date="2004-02" db="EMBL/GenBank/DDBJ databases">
        <title>Identification of differentially expressed genes in porcine embryos.</title>
        <authorList>
            <person name="Lee H.Y."/>
            <person name="Cui X.S."/>
            <person name="Jeong Y.J."/>
            <person name="Shin M.L."/>
            <person name="Hwang K.C."/>
            <person name="Kim N.H."/>
        </authorList>
    </citation>
    <scope>NUCLEOTIDE SEQUENCE [MRNA]</scope>
</reference>
<gene>
    <name type="primary">RPS17</name>
</gene>
<name>RS17_PIG</name>
<dbReference type="EMBL" id="AY550073">
    <property type="protein sequence ID" value="AAS55931.1"/>
    <property type="molecule type" value="mRNA"/>
</dbReference>
<dbReference type="RefSeq" id="NP_001001634.1">
    <property type="nucleotide sequence ID" value="NM_001001634.1"/>
</dbReference>
<dbReference type="PDB" id="3J7P">
    <property type="method" value="EM"/>
    <property type="resolution" value="3.50 A"/>
    <property type="chains" value="SR=1-135"/>
</dbReference>
<dbReference type="PDB" id="3J7R">
    <property type="method" value="EM"/>
    <property type="resolution" value="3.90 A"/>
    <property type="chains" value="SR=1-135"/>
</dbReference>
<dbReference type="PDBsum" id="3J7P"/>
<dbReference type="PDBsum" id="3J7R"/>
<dbReference type="SMR" id="Q6QAP7"/>
<dbReference type="FunCoup" id="Q6QAP7">
    <property type="interactions" value="2173"/>
</dbReference>
<dbReference type="STRING" id="9823.ENSSSCP00000020253"/>
<dbReference type="PaxDb" id="9823-ENSSSCP00000020253"/>
<dbReference type="PeptideAtlas" id="Q6QAP7"/>
<dbReference type="Ensembl" id="ENSSSCT00000030780.4">
    <property type="protein sequence ID" value="ENSSSCP00000020253.1"/>
    <property type="gene ID" value="ENSSSCG00000027358.4"/>
</dbReference>
<dbReference type="Ensembl" id="ENSSSCT00015107634.1">
    <property type="protein sequence ID" value="ENSSSCP00015045495.1"/>
    <property type="gene ID" value="ENSSSCG00015079345.1"/>
</dbReference>
<dbReference type="Ensembl" id="ENSSSCT00035074514.1">
    <property type="protein sequence ID" value="ENSSSCP00035030240.1"/>
    <property type="gene ID" value="ENSSSCG00035055844.1"/>
</dbReference>
<dbReference type="Ensembl" id="ENSSSCT00050101614.1">
    <property type="protein sequence ID" value="ENSSSCP00050044228.1"/>
    <property type="gene ID" value="ENSSSCG00050074232.1"/>
</dbReference>
<dbReference type="Ensembl" id="ENSSSCT00070035235.1">
    <property type="protein sequence ID" value="ENSSSCP00070029426.1"/>
    <property type="gene ID" value="ENSSSCG00070017849.1"/>
</dbReference>
<dbReference type="Ensembl" id="ENSSSCT00085010157">
    <property type="protein sequence ID" value="ENSSSCP00085007274"/>
    <property type="gene ID" value="ENSSSCG00085005455"/>
</dbReference>
<dbReference type="Ensembl" id="ENSSSCT00090038782">
    <property type="protein sequence ID" value="ENSSSCP00090024120"/>
    <property type="gene ID" value="ENSSSCG00090021891"/>
</dbReference>
<dbReference type="Ensembl" id="ENSSSCT00105018274">
    <property type="protein sequence ID" value="ENSSSCP00105012993"/>
    <property type="gene ID" value="ENSSSCG00105009222"/>
</dbReference>
<dbReference type="Ensembl" id="ENSSSCT00110020240">
    <property type="protein sequence ID" value="ENSSSCP00110013668"/>
    <property type="gene ID" value="ENSSSCG00110010555"/>
</dbReference>
<dbReference type="Ensembl" id="ENSSSCT00115009863">
    <property type="protein sequence ID" value="ENSSSCP00115009281"/>
    <property type="gene ID" value="ENSSSCG00115005707"/>
</dbReference>
<dbReference type="Ensembl" id="ENSSSCT00130037937">
    <property type="protein sequence ID" value="ENSSSCP00130026688"/>
    <property type="gene ID" value="ENSSSCG00130019554"/>
</dbReference>
<dbReference type="GeneID" id="414392"/>
<dbReference type="KEGG" id="ssc:414392"/>
<dbReference type="CTD" id="6218"/>
<dbReference type="eggNOG" id="KOG0187">
    <property type="taxonomic scope" value="Eukaryota"/>
</dbReference>
<dbReference type="GeneTree" id="ENSGT00390000006548"/>
<dbReference type="HOGENOM" id="CLU_112958_1_1_1"/>
<dbReference type="InParanoid" id="Q6QAP7"/>
<dbReference type="OMA" id="HTEHIEV"/>
<dbReference type="OrthoDB" id="1727351at2759"/>
<dbReference type="TreeFam" id="TF317992"/>
<dbReference type="Reactome" id="R-SSC-156827">
    <property type="pathway name" value="L13a-mediated translational silencing of Ceruloplasmin expression"/>
</dbReference>
<dbReference type="Reactome" id="R-SSC-1799339">
    <property type="pathway name" value="SRP-dependent cotranslational protein targeting to membrane"/>
</dbReference>
<dbReference type="Reactome" id="R-SSC-72649">
    <property type="pathway name" value="Translation initiation complex formation"/>
</dbReference>
<dbReference type="Reactome" id="R-SSC-72689">
    <property type="pathway name" value="Formation of a pool of free 40S subunits"/>
</dbReference>
<dbReference type="Reactome" id="R-SSC-72695">
    <property type="pathway name" value="Formation of the ternary complex, and subsequently, the 43S complex"/>
</dbReference>
<dbReference type="Reactome" id="R-SSC-72702">
    <property type="pathway name" value="Ribosomal scanning and start codon recognition"/>
</dbReference>
<dbReference type="Reactome" id="R-SSC-72706">
    <property type="pathway name" value="GTP hydrolysis and joining of the 60S ribosomal subunit"/>
</dbReference>
<dbReference type="Reactome" id="R-SSC-975956">
    <property type="pathway name" value="Nonsense Mediated Decay (NMD) independent of the Exon Junction Complex (EJC)"/>
</dbReference>
<dbReference type="Reactome" id="R-SSC-975957">
    <property type="pathway name" value="Nonsense Mediated Decay (NMD) enhanced by the Exon Junction Complex (EJC)"/>
</dbReference>
<dbReference type="Proteomes" id="UP000008227">
    <property type="component" value="Chromosome 7"/>
</dbReference>
<dbReference type="Proteomes" id="UP000314985">
    <property type="component" value="Chromosome 7"/>
</dbReference>
<dbReference type="Proteomes" id="UP000694570">
    <property type="component" value="Unplaced"/>
</dbReference>
<dbReference type="Proteomes" id="UP000694571">
    <property type="component" value="Unplaced"/>
</dbReference>
<dbReference type="Proteomes" id="UP000694720">
    <property type="component" value="Unplaced"/>
</dbReference>
<dbReference type="Proteomes" id="UP000694722">
    <property type="component" value="Unplaced"/>
</dbReference>
<dbReference type="Proteomes" id="UP000694723">
    <property type="component" value="Unplaced"/>
</dbReference>
<dbReference type="Proteomes" id="UP000694724">
    <property type="component" value="Unplaced"/>
</dbReference>
<dbReference type="Proteomes" id="UP000694725">
    <property type="component" value="Unplaced"/>
</dbReference>
<dbReference type="Proteomes" id="UP000694726">
    <property type="component" value="Unplaced"/>
</dbReference>
<dbReference type="Proteomes" id="UP000694727">
    <property type="component" value="Unplaced"/>
</dbReference>
<dbReference type="Proteomes" id="UP000694728">
    <property type="component" value="Unplaced"/>
</dbReference>
<dbReference type="Bgee" id="ENSSSCG00000027358">
    <property type="expression patterns" value="Expressed in blood and 45 other cell types or tissues"/>
</dbReference>
<dbReference type="GO" id="GO:0098556">
    <property type="term" value="C:cytoplasmic side of rough endoplasmic reticulum membrane"/>
    <property type="evidence" value="ECO:0000314"/>
    <property type="project" value="UniProtKB"/>
</dbReference>
<dbReference type="GO" id="GO:0022627">
    <property type="term" value="C:cytosolic small ribosomal subunit"/>
    <property type="evidence" value="ECO:0000314"/>
    <property type="project" value="UniProtKB"/>
</dbReference>
<dbReference type="GO" id="GO:0005730">
    <property type="term" value="C:nucleolus"/>
    <property type="evidence" value="ECO:0007669"/>
    <property type="project" value="UniProtKB-SubCell"/>
</dbReference>
<dbReference type="GO" id="GO:0032040">
    <property type="term" value="C:small-subunit processome"/>
    <property type="evidence" value="ECO:0000250"/>
    <property type="project" value="UniProtKB"/>
</dbReference>
<dbReference type="GO" id="GO:0045202">
    <property type="term" value="C:synapse"/>
    <property type="evidence" value="ECO:0007669"/>
    <property type="project" value="Ensembl"/>
</dbReference>
<dbReference type="GO" id="GO:0003735">
    <property type="term" value="F:structural constituent of ribosome"/>
    <property type="evidence" value="ECO:0007669"/>
    <property type="project" value="Ensembl"/>
</dbReference>
<dbReference type="GO" id="GO:0042274">
    <property type="term" value="P:ribosomal small subunit biogenesis"/>
    <property type="evidence" value="ECO:0000250"/>
    <property type="project" value="UniProtKB"/>
</dbReference>
<dbReference type="GO" id="GO:0006412">
    <property type="term" value="P:translation"/>
    <property type="evidence" value="ECO:0007669"/>
    <property type="project" value="InterPro"/>
</dbReference>
<dbReference type="FunFam" id="1.10.60.20:FF:000001">
    <property type="entry name" value="40S ribosomal protein S17"/>
    <property type="match status" value="1"/>
</dbReference>
<dbReference type="Gene3D" id="1.10.60.20">
    <property type="entry name" value="Ribosomal protein S17e-like"/>
    <property type="match status" value="1"/>
</dbReference>
<dbReference type="HAMAP" id="MF_00511">
    <property type="entry name" value="Ribosomal_eS17"/>
    <property type="match status" value="1"/>
</dbReference>
<dbReference type="InterPro" id="IPR001210">
    <property type="entry name" value="Ribosomal_eS17"/>
</dbReference>
<dbReference type="InterPro" id="IPR018273">
    <property type="entry name" value="Ribosomal_eS17_CS"/>
</dbReference>
<dbReference type="InterPro" id="IPR036401">
    <property type="entry name" value="Ribosomal_eS17_sf"/>
</dbReference>
<dbReference type="NCBIfam" id="NF002242">
    <property type="entry name" value="PRK01151.1"/>
    <property type="match status" value="1"/>
</dbReference>
<dbReference type="PANTHER" id="PTHR10732">
    <property type="entry name" value="40S RIBOSOMAL PROTEIN S17"/>
    <property type="match status" value="1"/>
</dbReference>
<dbReference type="PANTHER" id="PTHR10732:SF0">
    <property type="entry name" value="40S RIBOSOMAL PROTEIN S17"/>
    <property type="match status" value="1"/>
</dbReference>
<dbReference type="Pfam" id="PF00833">
    <property type="entry name" value="Ribosomal_S17e"/>
    <property type="match status" value="1"/>
</dbReference>
<dbReference type="SUPFAM" id="SSF116820">
    <property type="entry name" value="Rps17e-like"/>
    <property type="match status" value="1"/>
</dbReference>
<dbReference type="PROSITE" id="PS00712">
    <property type="entry name" value="RIBOSOMAL_S17E"/>
    <property type="match status" value="1"/>
</dbReference>
<evidence type="ECO:0000250" key="1">
    <source>
        <dbReference type="UniProtKB" id="P08708"/>
    </source>
</evidence>
<evidence type="ECO:0000250" key="2">
    <source>
        <dbReference type="UniProtKB" id="P63276"/>
    </source>
</evidence>
<evidence type="ECO:0000305" key="3"/>